<feature type="chain" id="PRO_0000076712" description="3-isopropylmalate dehydratase large subunit 2">
    <location>
        <begin position="1"/>
        <end position="468"/>
    </location>
</feature>
<feature type="binding site" evidence="1">
    <location>
        <position position="349"/>
    </location>
    <ligand>
        <name>[4Fe-4S] cluster</name>
        <dbReference type="ChEBI" id="CHEBI:49883"/>
    </ligand>
</feature>
<feature type="binding site" evidence="1">
    <location>
        <position position="409"/>
    </location>
    <ligand>
        <name>[4Fe-4S] cluster</name>
        <dbReference type="ChEBI" id="CHEBI:49883"/>
    </ligand>
</feature>
<feature type="binding site" evidence="1">
    <location>
        <position position="412"/>
    </location>
    <ligand>
        <name>[4Fe-4S] cluster</name>
        <dbReference type="ChEBI" id="CHEBI:49883"/>
    </ligand>
</feature>
<reference key="1">
    <citation type="journal article" date="2002" name="DNA Res.">
        <title>Complete genomic sequence of nitrogen-fixing symbiotic bacterium Bradyrhizobium japonicum USDA110.</title>
        <authorList>
            <person name="Kaneko T."/>
            <person name="Nakamura Y."/>
            <person name="Sato S."/>
            <person name="Minamisawa K."/>
            <person name="Uchiumi T."/>
            <person name="Sasamoto S."/>
            <person name="Watanabe A."/>
            <person name="Idesawa K."/>
            <person name="Iriguchi M."/>
            <person name="Kawashima K."/>
            <person name="Kohara M."/>
            <person name="Matsumoto M."/>
            <person name="Shimpo S."/>
            <person name="Tsuruoka H."/>
            <person name="Wada T."/>
            <person name="Yamada M."/>
            <person name="Tabata S."/>
        </authorList>
    </citation>
    <scope>NUCLEOTIDE SEQUENCE [LARGE SCALE GENOMIC DNA]</scope>
    <source>
        <strain>JCM 10833 / BCRC 13528 / IAM 13628 / NBRC 14792 / USDA 110</strain>
    </source>
</reference>
<gene>
    <name evidence="1" type="primary">leuC2</name>
    <name type="ordered locus">blr0488</name>
</gene>
<protein>
    <recommendedName>
        <fullName evidence="1">3-isopropylmalate dehydratase large subunit 2</fullName>
        <ecNumber evidence="1">4.2.1.33</ecNumber>
    </recommendedName>
    <alternativeName>
        <fullName evidence="1">Alpha-IPM isomerase 2</fullName>
        <shortName evidence="1">IPMI 2</shortName>
    </alternativeName>
    <alternativeName>
        <fullName evidence="1">Isopropylmalate isomerase 2</fullName>
    </alternativeName>
</protein>
<proteinExistence type="inferred from homology"/>
<comment type="function">
    <text evidence="1">Catalyzes the isomerization between 2-isopropylmalate and 3-isopropylmalate, via the formation of 2-isopropylmaleate.</text>
</comment>
<comment type="catalytic activity">
    <reaction evidence="1">
        <text>(2R,3S)-3-isopropylmalate = (2S)-2-isopropylmalate</text>
        <dbReference type="Rhea" id="RHEA:32287"/>
        <dbReference type="ChEBI" id="CHEBI:1178"/>
        <dbReference type="ChEBI" id="CHEBI:35121"/>
        <dbReference type="EC" id="4.2.1.33"/>
    </reaction>
</comment>
<comment type="cofactor">
    <cofactor evidence="1">
        <name>[4Fe-4S] cluster</name>
        <dbReference type="ChEBI" id="CHEBI:49883"/>
    </cofactor>
    <text evidence="1">Binds 1 [4Fe-4S] cluster per subunit.</text>
</comment>
<comment type="pathway">
    <text evidence="1">Amino-acid biosynthesis; L-leucine biosynthesis; L-leucine from 3-methyl-2-oxobutanoate: step 2/4.</text>
</comment>
<comment type="subunit">
    <text evidence="1">Heterodimer of LeuC and LeuD.</text>
</comment>
<comment type="similarity">
    <text evidence="1">Belongs to the aconitase/IPM isomerase family. LeuC type 1 subfamily.</text>
</comment>
<dbReference type="EC" id="4.2.1.33" evidence="1"/>
<dbReference type="EMBL" id="BA000040">
    <property type="protein sequence ID" value="BAC45753.1"/>
    <property type="molecule type" value="Genomic_DNA"/>
</dbReference>
<dbReference type="RefSeq" id="NP_767128.1">
    <property type="nucleotide sequence ID" value="NC_004463.1"/>
</dbReference>
<dbReference type="RefSeq" id="WP_011083319.1">
    <property type="nucleotide sequence ID" value="NC_004463.1"/>
</dbReference>
<dbReference type="SMR" id="Q89X34"/>
<dbReference type="FunCoup" id="Q89X34">
    <property type="interactions" value="642"/>
</dbReference>
<dbReference type="STRING" id="224911.AAV28_41695"/>
<dbReference type="EnsemblBacteria" id="BAC45753">
    <property type="protein sequence ID" value="BAC45753"/>
    <property type="gene ID" value="BAC45753"/>
</dbReference>
<dbReference type="GeneID" id="46495633"/>
<dbReference type="KEGG" id="bja:blr0488"/>
<dbReference type="PATRIC" id="fig|224911.44.peg.9023"/>
<dbReference type="eggNOG" id="COG0065">
    <property type="taxonomic scope" value="Bacteria"/>
</dbReference>
<dbReference type="HOGENOM" id="CLU_006714_3_4_5"/>
<dbReference type="InParanoid" id="Q89X34"/>
<dbReference type="OrthoDB" id="9802769at2"/>
<dbReference type="PhylomeDB" id="Q89X34"/>
<dbReference type="UniPathway" id="UPA00048">
    <property type="reaction ID" value="UER00071"/>
</dbReference>
<dbReference type="Proteomes" id="UP000002526">
    <property type="component" value="Chromosome"/>
</dbReference>
<dbReference type="GO" id="GO:0003861">
    <property type="term" value="F:3-isopropylmalate dehydratase activity"/>
    <property type="evidence" value="ECO:0007669"/>
    <property type="project" value="UniProtKB-UniRule"/>
</dbReference>
<dbReference type="GO" id="GO:0051539">
    <property type="term" value="F:4 iron, 4 sulfur cluster binding"/>
    <property type="evidence" value="ECO:0007669"/>
    <property type="project" value="UniProtKB-KW"/>
</dbReference>
<dbReference type="GO" id="GO:0046872">
    <property type="term" value="F:metal ion binding"/>
    <property type="evidence" value="ECO:0007669"/>
    <property type="project" value="UniProtKB-KW"/>
</dbReference>
<dbReference type="GO" id="GO:0009098">
    <property type="term" value="P:L-leucine biosynthetic process"/>
    <property type="evidence" value="ECO:0007669"/>
    <property type="project" value="UniProtKB-UniRule"/>
</dbReference>
<dbReference type="CDD" id="cd01583">
    <property type="entry name" value="IPMI"/>
    <property type="match status" value="1"/>
</dbReference>
<dbReference type="FunFam" id="3.30.499.10:FF:000007">
    <property type="entry name" value="3-isopropylmalate dehydratase large subunit"/>
    <property type="match status" value="1"/>
</dbReference>
<dbReference type="Gene3D" id="3.30.499.10">
    <property type="entry name" value="Aconitase, domain 3"/>
    <property type="match status" value="2"/>
</dbReference>
<dbReference type="HAMAP" id="MF_01026">
    <property type="entry name" value="LeuC_type1"/>
    <property type="match status" value="1"/>
</dbReference>
<dbReference type="InterPro" id="IPR004430">
    <property type="entry name" value="3-IsopropMal_deHydase_lsu"/>
</dbReference>
<dbReference type="InterPro" id="IPR015931">
    <property type="entry name" value="Acnase/IPM_dHydase_lsu_aba_1/3"/>
</dbReference>
<dbReference type="InterPro" id="IPR001030">
    <property type="entry name" value="Acoase/IPM_deHydtase_lsu_aba"/>
</dbReference>
<dbReference type="InterPro" id="IPR018136">
    <property type="entry name" value="Aconitase_4Fe-4S_BS"/>
</dbReference>
<dbReference type="InterPro" id="IPR036008">
    <property type="entry name" value="Aconitase_4Fe-4S_dom"/>
</dbReference>
<dbReference type="InterPro" id="IPR050067">
    <property type="entry name" value="IPM_dehydratase_rel_enz"/>
</dbReference>
<dbReference type="InterPro" id="IPR033941">
    <property type="entry name" value="IPMI_cat"/>
</dbReference>
<dbReference type="NCBIfam" id="TIGR00170">
    <property type="entry name" value="leuC"/>
    <property type="match status" value="1"/>
</dbReference>
<dbReference type="NCBIfam" id="NF004016">
    <property type="entry name" value="PRK05478.1"/>
    <property type="match status" value="1"/>
</dbReference>
<dbReference type="NCBIfam" id="NF009116">
    <property type="entry name" value="PRK12466.1"/>
    <property type="match status" value="1"/>
</dbReference>
<dbReference type="PANTHER" id="PTHR43822:SF9">
    <property type="entry name" value="3-ISOPROPYLMALATE DEHYDRATASE"/>
    <property type="match status" value="1"/>
</dbReference>
<dbReference type="PANTHER" id="PTHR43822">
    <property type="entry name" value="HOMOACONITASE, MITOCHONDRIAL-RELATED"/>
    <property type="match status" value="1"/>
</dbReference>
<dbReference type="Pfam" id="PF00330">
    <property type="entry name" value="Aconitase"/>
    <property type="match status" value="1"/>
</dbReference>
<dbReference type="PRINTS" id="PR00415">
    <property type="entry name" value="ACONITASE"/>
</dbReference>
<dbReference type="SUPFAM" id="SSF53732">
    <property type="entry name" value="Aconitase iron-sulfur domain"/>
    <property type="match status" value="1"/>
</dbReference>
<dbReference type="PROSITE" id="PS00450">
    <property type="entry name" value="ACONITASE_1"/>
    <property type="match status" value="1"/>
</dbReference>
<dbReference type="PROSITE" id="PS01244">
    <property type="entry name" value="ACONITASE_2"/>
    <property type="match status" value="1"/>
</dbReference>
<organism>
    <name type="scientific">Bradyrhizobium diazoefficiens (strain JCM 10833 / BCRC 13528 / IAM 13628 / NBRC 14792 / USDA 110)</name>
    <dbReference type="NCBI Taxonomy" id="224911"/>
    <lineage>
        <taxon>Bacteria</taxon>
        <taxon>Pseudomonadati</taxon>
        <taxon>Pseudomonadota</taxon>
        <taxon>Alphaproteobacteria</taxon>
        <taxon>Hyphomicrobiales</taxon>
        <taxon>Nitrobacteraceae</taxon>
        <taxon>Bradyrhizobium</taxon>
    </lineage>
</organism>
<sequence>MSKPTTLYDKIWNDHLVHEADDGTCLLYIDRHLVHEVTSPQAFEGLRATGRKVHAPEKTLAVVDHNVPTTDRTKPNPDPESIEQIKALADNAREFGIEYYNEFDKRQGIVHVIGPEQGFTLPGTTIVCGDSHTSTHGAFGALAHGIGTSEVEHVLATQTLIQKKAKNMRVTVDGKLPDGVTGKDIILAIIGEIGTAGGTGYVLEYAGEAIRALSMEGRMTVCNMSIEGGARAGLVAPDQKAYDFLRDRPKAPKGAAWDAAMRYWEKLRSDDGAHFDHELRLDAAKLPPIVTWGTSPEDVISVTGIVPDPDKIADEAKRLSKHRALKYMGLTAGTKITDIKLDRVFIGSCTNGRIEDLRAAAKIAEGKQVSASVNAMVVPGSGIVKEQAEAEGLDKIFIKAGFEWREPGCSMCLAMNPDKLKPEERCASTSNRNFEGRQGFKGRTHLVSPAMAAAAAIAGHFVDVREWR</sequence>
<accession>Q89X34</accession>
<name>LEUC2_BRADU</name>
<keyword id="KW-0004">4Fe-4S</keyword>
<keyword id="KW-0028">Amino-acid biosynthesis</keyword>
<keyword id="KW-0100">Branched-chain amino acid biosynthesis</keyword>
<keyword id="KW-0408">Iron</keyword>
<keyword id="KW-0411">Iron-sulfur</keyword>
<keyword id="KW-0432">Leucine biosynthesis</keyword>
<keyword id="KW-0456">Lyase</keyword>
<keyword id="KW-0479">Metal-binding</keyword>
<keyword id="KW-1185">Reference proteome</keyword>
<evidence type="ECO:0000255" key="1">
    <source>
        <dbReference type="HAMAP-Rule" id="MF_01026"/>
    </source>
</evidence>